<organism>
    <name type="scientific">Staphylococcus aureus (strain MW2)</name>
    <dbReference type="NCBI Taxonomy" id="196620"/>
    <lineage>
        <taxon>Bacteria</taxon>
        <taxon>Bacillati</taxon>
        <taxon>Bacillota</taxon>
        <taxon>Bacilli</taxon>
        <taxon>Bacillales</taxon>
        <taxon>Staphylococcaceae</taxon>
        <taxon>Staphylococcus</taxon>
    </lineage>
</organism>
<sequence length="250" mass="28450">MLMRQKGIIIKAVDYGESDKIITILNEHGAKVPLMARRAKKVKTGLQAQTQLFVYGLFIYNQWRGMGTLNSVDVISQHYKLQMDLFVSSYASLAAETIERSMDEGDIAPYNYQLLQFVLEKIESGTSAQLMSVVVMLKCMKRFGFTASFNRCAVSGNDTQADLIGYSFKFDGAISRQEASKDVHAVILSNKTLYLLDVLQKLPIDKMNSLNIHQEIIDEMSDIILMLYREYAGMFFKSQKLINQLKRLEQ</sequence>
<keyword id="KW-0227">DNA damage</keyword>
<keyword id="KW-0233">DNA recombination</keyword>
<keyword id="KW-0234">DNA repair</keyword>
<proteinExistence type="inferred from homology"/>
<comment type="function">
    <text evidence="1">Involved in DNA repair and RecF pathway recombination.</text>
</comment>
<comment type="similarity">
    <text evidence="1">Belongs to the RecO family.</text>
</comment>
<gene>
    <name evidence="1" type="primary">recO</name>
    <name type="ordered locus">MW1518</name>
</gene>
<name>RECO_STAAW</name>
<evidence type="ECO:0000255" key="1">
    <source>
        <dbReference type="HAMAP-Rule" id="MF_00201"/>
    </source>
</evidence>
<protein>
    <recommendedName>
        <fullName evidence="1">DNA repair protein RecO</fullName>
    </recommendedName>
    <alternativeName>
        <fullName evidence="1">Recombination protein O</fullName>
    </alternativeName>
</protein>
<feature type="chain" id="PRO_0000205000" description="DNA repair protein RecO">
    <location>
        <begin position="1"/>
        <end position="250"/>
    </location>
</feature>
<accession>Q8NWB5</accession>
<reference key="1">
    <citation type="journal article" date="2002" name="Lancet">
        <title>Genome and virulence determinants of high virulence community-acquired MRSA.</title>
        <authorList>
            <person name="Baba T."/>
            <person name="Takeuchi F."/>
            <person name="Kuroda M."/>
            <person name="Yuzawa H."/>
            <person name="Aoki K."/>
            <person name="Oguchi A."/>
            <person name="Nagai Y."/>
            <person name="Iwama N."/>
            <person name="Asano K."/>
            <person name="Naimi T."/>
            <person name="Kuroda H."/>
            <person name="Cui L."/>
            <person name="Yamamoto K."/>
            <person name="Hiramatsu K."/>
        </authorList>
    </citation>
    <scope>NUCLEOTIDE SEQUENCE [LARGE SCALE GENOMIC DNA]</scope>
    <source>
        <strain>MW2</strain>
    </source>
</reference>
<dbReference type="EMBL" id="BA000033">
    <property type="protein sequence ID" value="BAB95383.1"/>
    <property type="molecule type" value="Genomic_DNA"/>
</dbReference>
<dbReference type="SMR" id="Q8NWB5"/>
<dbReference type="KEGG" id="sam:MW1518"/>
<dbReference type="HOGENOM" id="CLU_066632_4_0_9"/>
<dbReference type="GO" id="GO:0043590">
    <property type="term" value="C:bacterial nucleoid"/>
    <property type="evidence" value="ECO:0007669"/>
    <property type="project" value="TreeGrafter"/>
</dbReference>
<dbReference type="GO" id="GO:0006310">
    <property type="term" value="P:DNA recombination"/>
    <property type="evidence" value="ECO:0007669"/>
    <property type="project" value="UniProtKB-UniRule"/>
</dbReference>
<dbReference type="GO" id="GO:0006302">
    <property type="term" value="P:double-strand break repair"/>
    <property type="evidence" value="ECO:0007669"/>
    <property type="project" value="TreeGrafter"/>
</dbReference>
<dbReference type="Gene3D" id="2.40.50.140">
    <property type="entry name" value="Nucleic acid-binding proteins"/>
    <property type="match status" value="1"/>
</dbReference>
<dbReference type="Gene3D" id="1.20.1440.120">
    <property type="entry name" value="Recombination protein O, C-terminal domain"/>
    <property type="match status" value="1"/>
</dbReference>
<dbReference type="HAMAP" id="MF_00201">
    <property type="entry name" value="RecO"/>
    <property type="match status" value="1"/>
</dbReference>
<dbReference type="InterPro" id="IPR037278">
    <property type="entry name" value="ARFGAP/RecO"/>
</dbReference>
<dbReference type="InterPro" id="IPR022572">
    <property type="entry name" value="DNA_rep/recomb_RecO_N"/>
</dbReference>
<dbReference type="InterPro" id="IPR012340">
    <property type="entry name" value="NA-bd_OB-fold"/>
</dbReference>
<dbReference type="InterPro" id="IPR003717">
    <property type="entry name" value="RecO"/>
</dbReference>
<dbReference type="InterPro" id="IPR042242">
    <property type="entry name" value="RecO_C"/>
</dbReference>
<dbReference type="NCBIfam" id="TIGR00613">
    <property type="entry name" value="reco"/>
    <property type="match status" value="1"/>
</dbReference>
<dbReference type="PANTHER" id="PTHR33991">
    <property type="entry name" value="DNA REPAIR PROTEIN RECO"/>
    <property type="match status" value="1"/>
</dbReference>
<dbReference type="PANTHER" id="PTHR33991:SF1">
    <property type="entry name" value="DNA REPAIR PROTEIN RECO"/>
    <property type="match status" value="1"/>
</dbReference>
<dbReference type="Pfam" id="PF02565">
    <property type="entry name" value="RecO_C"/>
    <property type="match status" value="1"/>
</dbReference>
<dbReference type="Pfam" id="PF11967">
    <property type="entry name" value="RecO_N"/>
    <property type="match status" value="1"/>
</dbReference>
<dbReference type="SUPFAM" id="SSF57863">
    <property type="entry name" value="ArfGap/RecO-like zinc finger"/>
    <property type="match status" value="1"/>
</dbReference>
<dbReference type="SUPFAM" id="SSF50249">
    <property type="entry name" value="Nucleic acid-binding proteins"/>
    <property type="match status" value="1"/>
</dbReference>